<reference key="1">
    <citation type="journal article" date="1992" name="Mol. Gen. Genet.">
        <title>Methanococcus voltae harbors four gene clusters potentially encoding two [NiFe] and two [NiFeSe] hydrogenases, each of the cofactor F420-reducing or F420-non-reducing types.</title>
        <authorList>
            <person name="Halboth S."/>
            <person name="Klein A."/>
        </authorList>
    </citation>
    <scope>NUCLEOTIDE SEQUENCE [GENOMIC DNA]</scope>
    <source>
        <strain>ATCC 33273 / DSM 1537 / NBRC 100457 / OCM 70 / PS</strain>
    </source>
</reference>
<comment type="cofactor">
    <cofactor evidence="1">
        <name>[2Fe-2S] cluster</name>
        <dbReference type="ChEBI" id="CHEBI:190135"/>
    </cofactor>
    <text evidence="1">Binds 1 [2Fe-2S] cluster.</text>
</comment>
<comment type="subunit">
    <text evidence="1">The F420-non-reducing hydrogenase vhu is composed of four subunits; VhuA, VhuD, VhuG and VhuU.</text>
</comment>
<comment type="similarity">
    <text evidence="2">Belongs to the MvhD/VhuD family.</text>
</comment>
<name>VHUD_METVO</name>
<protein>
    <recommendedName>
        <fullName>F420-non-reducing hydrogenase vhu iron-sulfur subunit D</fullName>
        <ecNumber>1.12.99.-</ecNumber>
    </recommendedName>
</protein>
<keyword id="KW-0001">2Fe-2S</keyword>
<keyword id="KW-0249">Electron transport</keyword>
<keyword id="KW-0408">Iron</keyword>
<keyword id="KW-0411">Iron-sulfur</keyword>
<keyword id="KW-0479">Metal-binding</keyword>
<keyword id="KW-0560">Oxidoreductase</keyword>
<keyword id="KW-0813">Transport</keyword>
<gene>
    <name type="primary">vhuD</name>
</gene>
<organism>
    <name type="scientific">Methanococcus voltae</name>
    <dbReference type="NCBI Taxonomy" id="2188"/>
    <lineage>
        <taxon>Archaea</taxon>
        <taxon>Methanobacteriati</taxon>
        <taxon>Methanobacteriota</taxon>
        <taxon>Methanomada group</taxon>
        <taxon>Methanococci</taxon>
        <taxon>Methanococcales</taxon>
        <taxon>Methanococcaceae</taxon>
        <taxon>Methanococcus</taxon>
    </lineage>
</organism>
<sequence length="134" mass="14690">MAEPIIMAFICYQCGYGAADLAGTSRMQYPASVRPIRVPCTGKFLYYLRIKGIPKGADAVFVAGCKPNECAFETGNFSVEERVKMTKQILDEMGIGGDRIEMFFMSGADAGKFTEAVNEMTDRAKKLGPNPLKK</sequence>
<proteinExistence type="inferred from homology"/>
<feature type="chain" id="PRO_0000218279" description="F420-non-reducing hydrogenase vhu iron-sulfur subunit D">
    <location>
        <begin position="1"/>
        <end position="134"/>
    </location>
</feature>
<dbReference type="EC" id="1.12.99.-"/>
<dbReference type="EMBL" id="X61204">
    <property type="protein sequence ID" value="CAA43508.1"/>
    <property type="molecule type" value="Genomic_DNA"/>
</dbReference>
<dbReference type="PIR" id="S24799">
    <property type="entry name" value="S24799"/>
</dbReference>
<dbReference type="SMR" id="Q00408"/>
<dbReference type="GO" id="GO:0051537">
    <property type="term" value="F:2 iron, 2 sulfur cluster binding"/>
    <property type="evidence" value="ECO:0007669"/>
    <property type="project" value="UniProtKB-KW"/>
</dbReference>
<dbReference type="GO" id="GO:0046872">
    <property type="term" value="F:metal ion binding"/>
    <property type="evidence" value="ECO:0007669"/>
    <property type="project" value="UniProtKB-KW"/>
</dbReference>
<dbReference type="GO" id="GO:0016491">
    <property type="term" value="F:oxidoreductase activity"/>
    <property type="evidence" value="ECO:0007669"/>
    <property type="project" value="UniProtKB-KW"/>
</dbReference>
<dbReference type="InterPro" id="IPR003813">
    <property type="entry name" value="MvhD/FlpD"/>
</dbReference>
<dbReference type="NCBIfam" id="NF045873">
    <property type="entry name" value="F420_non_VhuD"/>
    <property type="match status" value="1"/>
</dbReference>
<dbReference type="Pfam" id="PF02662">
    <property type="entry name" value="FlpD"/>
    <property type="match status" value="1"/>
</dbReference>
<evidence type="ECO:0000250" key="1"/>
<evidence type="ECO:0000305" key="2"/>
<accession>Q00408</accession>